<name>CTGEF_HUMAN</name>
<evidence type="ECO:0000255" key="1"/>
<evidence type="ECO:0000256" key="2">
    <source>
        <dbReference type="SAM" id="MobiDB-lite"/>
    </source>
</evidence>
<evidence type="ECO:0000305" key="3"/>
<protein>
    <recommendedName>
        <fullName>cTAGE family member 15</fullName>
        <shortName>Protein cTAGE-15</shortName>
    </recommendedName>
</protein>
<keyword id="KW-0175">Coiled coil</keyword>
<keyword id="KW-0472">Membrane</keyword>
<keyword id="KW-1185">Reference proteome</keyword>
<keyword id="KW-0812">Transmembrane</keyword>
<keyword id="KW-1133">Transmembrane helix</keyword>
<sequence length="777" mass="87868">MEEPGATPQPYLGLVLEELRRVVAALPESMRPDENPYGFPSELVVCAAVIGFFVVLLFLWRSFRSVRSRLYVGREQKLGATLSGLIEEKCKLLEKFSLIQKEYEGYEVESSLEDASFEKAAAEEARSLEATCEKLNRSNSELEDEILCLEKDLKEEKSKHSQQDELMADISKSIQSLEDESKSLKSQIAEAKIICKTFKMSEERRAIAIKDALNENSQLQTSHKQLFQQEAEVWKGQVSELNKQKITFEDSKVHAEQVLNDKENHIKTLTGHLPMMKDQAAVLEEDTTDDDNLELEVNSQWENGANLDDPLKGALKKLIHAAKLNVSLKSLEGERNHIIIQLSEVDKTKEELTEHIKNLQTQQASLQSENIYFESENQKLQQKLKIMTEFYQENEMKLYRKLTVEENYRIEEEEKLSRVEEKLSRATEQLETYRKLAKDLEEELERTVHFYQKQVISYEKRGHDNWLAARTAERNLSDLRKENAHNKQKLTETELKFELLEKDPNALDVSNTAFGREHAPNGPAPLGQRSSETRAFLSPQTLLEDPLGLSPVLPEGGGRGPRGPGNPLDHQITNERGEPSCDRLTDPHRAPSDTGSLSSPVEQDCKMMFPPPGQSYPDSALPPQREDRFYSNSERLSGSAEPRSFKMTSLDKMDGSMPSEMESSRNDAKDDLGNLNVPDSSLPAENEATGPGFIPPPLAPVRGPLFPVDTRGPFMRRGPPFPPPPPGTMFGASRGYFPPRDFPGPPHAPFAMRNIYPPRGLPPYFHPRPGFYPNPAF</sequence>
<feature type="chain" id="PRO_0000422399" description="cTAGE family member 15">
    <location>
        <begin position="1"/>
        <end position="777"/>
    </location>
</feature>
<feature type="transmembrane region" description="Helical" evidence="1">
    <location>
        <begin position="39"/>
        <end position="59"/>
    </location>
</feature>
<feature type="region of interest" description="Disordered" evidence="2">
    <location>
        <begin position="541"/>
        <end position="671"/>
    </location>
</feature>
<feature type="region of interest" description="Disordered" evidence="2">
    <location>
        <begin position="721"/>
        <end position="742"/>
    </location>
</feature>
<feature type="coiled-coil region" evidence="1">
    <location>
        <begin position="118"/>
        <end position="269"/>
    </location>
</feature>
<feature type="coiled-coil region" evidence="1">
    <location>
        <begin position="339"/>
        <end position="498"/>
    </location>
</feature>
<feature type="compositionally biased region" description="Basic and acidic residues" evidence="2">
    <location>
        <begin position="572"/>
        <end position="591"/>
    </location>
</feature>
<feature type="compositionally biased region" description="Basic and acidic residues" evidence="2">
    <location>
        <begin position="662"/>
        <end position="671"/>
    </location>
</feature>
<feature type="sequence conflict" description="In Ref. 3; AAI46819." evidence="3" ref="3">
    <original>Q</original>
    <variation>K</variation>
    <location>
        <position position="362"/>
    </location>
</feature>
<feature type="sequence conflict" description="In Ref. 3; AAI46819." evidence="3" ref="3">
    <original>F</original>
    <variation>L</variation>
    <location>
        <position position="765"/>
    </location>
</feature>
<feature type="sequence conflict" description="In Ref. 3; AAI46819." evidence="3" ref="3">
    <original>A</original>
    <variation>T</variation>
    <location>
        <position position="776"/>
    </location>
</feature>
<reference key="1">
    <citation type="journal article" date="2003" name="Nature">
        <title>The DNA sequence of human chromosome 7.</title>
        <authorList>
            <person name="Hillier L.W."/>
            <person name="Fulton R.S."/>
            <person name="Fulton L.A."/>
            <person name="Graves T.A."/>
            <person name="Pepin K.H."/>
            <person name="Wagner-McPherson C."/>
            <person name="Layman D."/>
            <person name="Maas J."/>
            <person name="Jaeger S."/>
            <person name="Walker R."/>
            <person name="Wylie K."/>
            <person name="Sekhon M."/>
            <person name="Becker M.C."/>
            <person name="O'Laughlin M.D."/>
            <person name="Schaller M.E."/>
            <person name="Fewell G.A."/>
            <person name="Delehaunty K.D."/>
            <person name="Miner T.L."/>
            <person name="Nash W.E."/>
            <person name="Cordes M."/>
            <person name="Du H."/>
            <person name="Sun H."/>
            <person name="Edwards J."/>
            <person name="Bradshaw-Cordum H."/>
            <person name="Ali J."/>
            <person name="Andrews S."/>
            <person name="Isak A."/>
            <person name="Vanbrunt A."/>
            <person name="Nguyen C."/>
            <person name="Du F."/>
            <person name="Lamar B."/>
            <person name="Courtney L."/>
            <person name="Kalicki J."/>
            <person name="Ozersky P."/>
            <person name="Bielicki L."/>
            <person name="Scott K."/>
            <person name="Holmes A."/>
            <person name="Harkins R."/>
            <person name="Harris A."/>
            <person name="Strong C.M."/>
            <person name="Hou S."/>
            <person name="Tomlinson C."/>
            <person name="Dauphin-Kohlberg S."/>
            <person name="Kozlowicz-Reilly A."/>
            <person name="Leonard S."/>
            <person name="Rohlfing T."/>
            <person name="Rock S.M."/>
            <person name="Tin-Wollam A.-M."/>
            <person name="Abbott A."/>
            <person name="Minx P."/>
            <person name="Maupin R."/>
            <person name="Strowmatt C."/>
            <person name="Latreille P."/>
            <person name="Miller N."/>
            <person name="Johnson D."/>
            <person name="Murray J."/>
            <person name="Woessner J.P."/>
            <person name="Wendl M.C."/>
            <person name="Yang S.-P."/>
            <person name="Schultz B.R."/>
            <person name="Wallis J.W."/>
            <person name="Spieth J."/>
            <person name="Bieri T.A."/>
            <person name="Nelson J.O."/>
            <person name="Berkowicz N."/>
            <person name="Wohldmann P.E."/>
            <person name="Cook L.L."/>
            <person name="Hickenbotham M.T."/>
            <person name="Eldred J."/>
            <person name="Williams D."/>
            <person name="Bedell J.A."/>
            <person name="Mardis E.R."/>
            <person name="Clifton S.W."/>
            <person name="Chissoe S.L."/>
            <person name="Marra M.A."/>
            <person name="Raymond C."/>
            <person name="Haugen E."/>
            <person name="Gillett W."/>
            <person name="Zhou Y."/>
            <person name="James R."/>
            <person name="Phelps K."/>
            <person name="Iadanoto S."/>
            <person name="Bubb K."/>
            <person name="Simms E."/>
            <person name="Levy R."/>
            <person name="Clendenning J."/>
            <person name="Kaul R."/>
            <person name="Kent W.J."/>
            <person name="Furey T.S."/>
            <person name="Baertsch R.A."/>
            <person name="Brent M.R."/>
            <person name="Keibler E."/>
            <person name="Flicek P."/>
            <person name="Bork P."/>
            <person name="Suyama M."/>
            <person name="Bailey J.A."/>
            <person name="Portnoy M.E."/>
            <person name="Torrents D."/>
            <person name="Chinwalla A.T."/>
            <person name="Gish W.R."/>
            <person name="Eddy S.R."/>
            <person name="McPherson J.D."/>
            <person name="Olson M.V."/>
            <person name="Eichler E.E."/>
            <person name="Green E.D."/>
            <person name="Waterston R.H."/>
            <person name="Wilson R.K."/>
        </authorList>
    </citation>
    <scope>NUCLEOTIDE SEQUENCE [LARGE SCALE GENOMIC DNA]</scope>
</reference>
<reference key="2">
    <citation type="journal article" date="2003" name="Science">
        <title>Human chromosome 7: DNA sequence and biology.</title>
        <authorList>
            <person name="Scherer S.W."/>
            <person name="Cheung J."/>
            <person name="MacDonald J.R."/>
            <person name="Osborne L.R."/>
            <person name="Nakabayashi K."/>
            <person name="Herbrick J.-A."/>
            <person name="Carson A.R."/>
            <person name="Parker-Katiraee L."/>
            <person name="Skaug J."/>
            <person name="Khaja R."/>
            <person name="Zhang J."/>
            <person name="Hudek A.K."/>
            <person name="Li M."/>
            <person name="Haddad M."/>
            <person name="Duggan G.E."/>
            <person name="Fernandez B.A."/>
            <person name="Kanematsu E."/>
            <person name="Gentles S."/>
            <person name="Christopoulos C.C."/>
            <person name="Choufani S."/>
            <person name="Kwasnicka D."/>
            <person name="Zheng X.H."/>
            <person name="Lai Z."/>
            <person name="Nusskern D.R."/>
            <person name="Zhang Q."/>
            <person name="Gu Z."/>
            <person name="Lu F."/>
            <person name="Zeesman S."/>
            <person name="Nowaczyk M.J."/>
            <person name="Teshima I."/>
            <person name="Chitayat D."/>
            <person name="Shuman C."/>
            <person name="Weksberg R."/>
            <person name="Zackai E.H."/>
            <person name="Grebe T.A."/>
            <person name="Cox S.R."/>
            <person name="Kirkpatrick S.J."/>
            <person name="Rahman N."/>
            <person name="Friedman J.M."/>
            <person name="Heng H.H.Q."/>
            <person name="Pelicci P.G."/>
            <person name="Lo-Coco F."/>
            <person name="Belloni E."/>
            <person name="Shaffer L.G."/>
            <person name="Pober B."/>
            <person name="Morton C.C."/>
            <person name="Gusella J.F."/>
            <person name="Bruns G.A.P."/>
            <person name="Korf B.R."/>
            <person name="Quade B.J."/>
            <person name="Ligon A.H."/>
            <person name="Ferguson H."/>
            <person name="Higgins A.W."/>
            <person name="Leach N.T."/>
            <person name="Herrick S.R."/>
            <person name="Lemyre E."/>
            <person name="Farra C.G."/>
            <person name="Kim H.-G."/>
            <person name="Summers A.M."/>
            <person name="Gripp K.W."/>
            <person name="Roberts W."/>
            <person name="Szatmari P."/>
            <person name="Winsor E.J.T."/>
            <person name="Grzeschik K.-H."/>
            <person name="Teebi A."/>
            <person name="Minassian B.A."/>
            <person name="Kere J."/>
            <person name="Armengol L."/>
            <person name="Pujana M.A."/>
            <person name="Estivill X."/>
            <person name="Wilson M.D."/>
            <person name="Koop B.F."/>
            <person name="Tosi S."/>
            <person name="Moore G.E."/>
            <person name="Boright A.P."/>
            <person name="Zlotorynski E."/>
            <person name="Kerem B."/>
            <person name="Kroisel P.M."/>
            <person name="Petek E."/>
            <person name="Oscier D.G."/>
            <person name="Mould S.J."/>
            <person name="Doehner H."/>
            <person name="Doehner K."/>
            <person name="Rommens J.M."/>
            <person name="Vincent J.B."/>
            <person name="Venter J.C."/>
            <person name="Li P.W."/>
            <person name="Mural R.J."/>
            <person name="Adams M.D."/>
            <person name="Tsui L.-C."/>
        </authorList>
    </citation>
    <scope>NUCLEOTIDE SEQUENCE [LARGE SCALE GENOMIC DNA]</scope>
</reference>
<reference key="3">
    <citation type="journal article" date="2004" name="Genome Res.">
        <title>The status, quality, and expansion of the NIH full-length cDNA project: the Mammalian Gene Collection (MGC).</title>
        <authorList>
            <consortium name="The MGC Project Team"/>
        </authorList>
    </citation>
    <scope>NUCLEOTIDE SEQUENCE [LARGE SCALE MRNA]</scope>
</reference>
<proteinExistence type="evidence at transcript level"/>
<gene>
    <name type="primary">CTAGE15</name>
    <name type="synonym">CTAGE15P</name>
</gene>
<organism>
    <name type="scientific">Homo sapiens</name>
    <name type="common">Human</name>
    <dbReference type="NCBI Taxonomy" id="9606"/>
    <lineage>
        <taxon>Eukaryota</taxon>
        <taxon>Metazoa</taxon>
        <taxon>Chordata</taxon>
        <taxon>Craniata</taxon>
        <taxon>Vertebrata</taxon>
        <taxon>Euteleostomi</taxon>
        <taxon>Mammalia</taxon>
        <taxon>Eutheria</taxon>
        <taxon>Euarchontoglires</taxon>
        <taxon>Primates</taxon>
        <taxon>Haplorrhini</taxon>
        <taxon>Catarrhini</taxon>
        <taxon>Hominidae</taxon>
        <taxon>Homo</taxon>
    </lineage>
</organism>
<accession>A4D2H0</accession>
<accession>A6H8Z8</accession>
<dbReference type="EMBL" id="AC073264">
    <property type="status" value="NOT_ANNOTATED_CDS"/>
    <property type="molecule type" value="Genomic_DNA"/>
</dbReference>
<dbReference type="EMBL" id="CH236959">
    <property type="protein sequence ID" value="EAL23792.1"/>
    <property type="molecule type" value="Genomic_DNA"/>
</dbReference>
<dbReference type="EMBL" id="BC146818">
    <property type="protein sequence ID" value="AAI46819.1"/>
    <property type="molecule type" value="mRNA"/>
</dbReference>
<dbReference type="CCDS" id="CCDS64788.1"/>
<dbReference type="RefSeq" id="NP_001008747.1">
    <property type="nucleotide sequence ID" value="NM_001008747.2"/>
</dbReference>
<dbReference type="SMR" id="A4D2H0"/>
<dbReference type="BioGRID" id="137333">
    <property type="interactions" value="4"/>
</dbReference>
<dbReference type="FunCoup" id="A4D2H0">
    <property type="interactions" value="13"/>
</dbReference>
<dbReference type="IntAct" id="A4D2H0">
    <property type="interactions" value="1"/>
</dbReference>
<dbReference type="iPTMnet" id="A4D2H0"/>
<dbReference type="PhosphoSitePlus" id="A4D2H0"/>
<dbReference type="BioMuta" id="CTAGE15"/>
<dbReference type="jPOST" id="A4D2H0"/>
<dbReference type="MassIVE" id="A4D2H0"/>
<dbReference type="PaxDb" id="9606-ENSP00000474204"/>
<dbReference type="PeptideAtlas" id="A4D2H0"/>
<dbReference type="DNASU" id="441294"/>
<dbReference type="Ensembl" id="ENST00000420911.2">
    <property type="protein sequence ID" value="ENSP00000474204.1"/>
    <property type="gene ID" value="ENSG00000271079.1"/>
</dbReference>
<dbReference type="Ensembl" id="ENST00000642487.1">
    <property type="protein sequence ID" value="ENSP00000493562.1"/>
    <property type="gene ID" value="ENSG00000285172.1"/>
</dbReference>
<dbReference type="GeneID" id="441294"/>
<dbReference type="KEGG" id="hsa:441294"/>
<dbReference type="MANE-Select" id="ENST00000420911.2">
    <property type="protein sequence ID" value="ENSP00000474204.1"/>
    <property type="RefSeq nucleotide sequence ID" value="NM_001008747.2"/>
    <property type="RefSeq protein sequence ID" value="NP_001008747.1"/>
</dbReference>
<dbReference type="UCSC" id="uc011kth.3">
    <property type="organism name" value="human"/>
</dbReference>
<dbReference type="AGR" id="HGNC:37295"/>
<dbReference type="CTD" id="441294"/>
<dbReference type="GeneCards" id="CTAGE15"/>
<dbReference type="HGNC" id="HGNC:37295">
    <property type="gene designation" value="CTAGE15"/>
</dbReference>
<dbReference type="HPA" id="ENSG00000271079">
    <property type="expression patterns" value="Tissue enriched (testis)"/>
</dbReference>
<dbReference type="neXtProt" id="NX_A4D2H0"/>
<dbReference type="VEuPathDB" id="HostDB:ENSG00000271079"/>
<dbReference type="eggNOG" id="ENOG502QUND">
    <property type="taxonomic scope" value="Eukaryota"/>
</dbReference>
<dbReference type="GeneTree" id="ENSGT00950000182767"/>
<dbReference type="HOGENOM" id="CLU_002106_2_0_1"/>
<dbReference type="InParanoid" id="A4D2H0"/>
<dbReference type="OMA" id="WELVVCT"/>
<dbReference type="OrthoDB" id="3548878at2759"/>
<dbReference type="PAN-GO" id="A4D2H0">
    <property type="GO annotations" value="5 GO annotations based on evolutionary models"/>
</dbReference>
<dbReference type="PhylomeDB" id="A4D2H0"/>
<dbReference type="PathwayCommons" id="A4D2H0"/>
<dbReference type="SignaLink" id="A4D2H0"/>
<dbReference type="BioGRID-ORCS" id="441294">
    <property type="hits" value="27 hits in 630 CRISPR screens"/>
</dbReference>
<dbReference type="GenomeRNAi" id="441294"/>
<dbReference type="Pharos" id="A4D2H0">
    <property type="development level" value="Tdark"/>
</dbReference>
<dbReference type="PRO" id="PR:A4D2H0"/>
<dbReference type="Proteomes" id="UP000005640">
    <property type="component" value="Chromosome 7"/>
</dbReference>
<dbReference type="RNAct" id="A4D2H0">
    <property type="molecule type" value="protein"/>
</dbReference>
<dbReference type="Bgee" id="ENSG00000271079">
    <property type="expression patterns" value="Expressed in primordial germ cell in gonad and 62 other cell types or tissues"/>
</dbReference>
<dbReference type="GO" id="GO:0070971">
    <property type="term" value="C:endoplasmic reticulum exit site"/>
    <property type="evidence" value="ECO:0000318"/>
    <property type="project" value="GO_Central"/>
</dbReference>
<dbReference type="GO" id="GO:0005789">
    <property type="term" value="C:endoplasmic reticulum membrane"/>
    <property type="evidence" value="ECO:0000318"/>
    <property type="project" value="GO_Central"/>
</dbReference>
<dbReference type="GO" id="GO:0006888">
    <property type="term" value="P:endoplasmic reticulum to Golgi vesicle-mediated transport"/>
    <property type="evidence" value="ECO:0000318"/>
    <property type="project" value="GO_Central"/>
</dbReference>
<dbReference type="GO" id="GO:0009306">
    <property type="term" value="P:protein secretion"/>
    <property type="evidence" value="ECO:0000318"/>
    <property type="project" value="GO_Central"/>
</dbReference>
<dbReference type="GO" id="GO:0035459">
    <property type="term" value="P:vesicle cargo loading"/>
    <property type="evidence" value="ECO:0000318"/>
    <property type="project" value="GO_Central"/>
</dbReference>
<dbReference type="FunFam" id="1.20.5.340:FF:000044">
    <property type="entry name" value="MIA SH3 domain ER export factor 2"/>
    <property type="match status" value="1"/>
</dbReference>
<dbReference type="Gene3D" id="1.20.5.340">
    <property type="match status" value="1"/>
</dbReference>
<dbReference type="InterPro" id="IPR051500">
    <property type="entry name" value="cTAGE_MIA/OTOR"/>
</dbReference>
<dbReference type="PANTHER" id="PTHR23158:SF57">
    <property type="entry name" value="CTAGE FAMILY MEMBER 15-RELATED"/>
    <property type="match status" value="1"/>
</dbReference>
<dbReference type="PANTHER" id="PTHR23158">
    <property type="entry name" value="MELANOMA INHIBITORY ACTIVITY-RELATED"/>
    <property type="match status" value="1"/>
</dbReference>
<comment type="subcellular location">
    <subcellularLocation>
        <location evidence="3">Membrane</location>
        <topology evidence="3">Single-pass membrane protein</topology>
    </subcellularLocation>
</comment>
<comment type="similarity">
    <text evidence="3">Belongs to the cTAGE family.</text>
</comment>